<organism>
    <name type="scientific">Oryza sativa subsp. japonica</name>
    <name type="common">Rice</name>
    <dbReference type="NCBI Taxonomy" id="39947"/>
    <lineage>
        <taxon>Eukaryota</taxon>
        <taxon>Viridiplantae</taxon>
        <taxon>Streptophyta</taxon>
        <taxon>Embryophyta</taxon>
        <taxon>Tracheophyta</taxon>
        <taxon>Spermatophyta</taxon>
        <taxon>Magnoliopsida</taxon>
        <taxon>Liliopsida</taxon>
        <taxon>Poales</taxon>
        <taxon>Poaceae</taxon>
        <taxon>BOP clade</taxon>
        <taxon>Oryzoideae</taxon>
        <taxon>Oryzeae</taxon>
        <taxon>Oryzinae</taxon>
        <taxon>Oryza</taxon>
        <taxon>Oryza sativa</taxon>
    </lineage>
</organism>
<dbReference type="EMBL" id="U43931">
    <property type="protein sequence ID" value="AAC02240.1"/>
    <property type="molecule type" value="mRNA"/>
</dbReference>
<dbReference type="EMBL" id="AC097368">
    <property type="protein sequence ID" value="AAO38459.1"/>
    <property type="molecule type" value="Genomic_DNA"/>
</dbReference>
<dbReference type="EMBL" id="DP000009">
    <property type="protein sequence ID" value="ABF98374.1"/>
    <property type="molecule type" value="Genomic_DNA"/>
</dbReference>
<dbReference type="EMBL" id="AP008209">
    <property type="protein sequence ID" value="BAF12898.1"/>
    <property type="molecule type" value="Genomic_DNA"/>
</dbReference>
<dbReference type="EMBL" id="AP014959">
    <property type="protein sequence ID" value="BAS85901.1"/>
    <property type="molecule type" value="Genomic_DNA"/>
</dbReference>
<dbReference type="EMBL" id="CM000140">
    <property type="protein sequence ID" value="EAZ28251.1"/>
    <property type="molecule type" value="Genomic_DNA"/>
</dbReference>
<dbReference type="EMBL" id="AK243015">
    <property type="protein sequence ID" value="BAH01406.1"/>
    <property type="molecule type" value="mRNA"/>
</dbReference>
<dbReference type="PIR" id="T03380">
    <property type="entry name" value="T03380"/>
</dbReference>
<dbReference type="RefSeq" id="XP_015629251.1">
    <property type="nucleotide sequence ID" value="XM_015773765.1"/>
</dbReference>
<dbReference type="FunCoup" id="Q10EK7">
    <property type="interactions" value="530"/>
</dbReference>
<dbReference type="STRING" id="39947.Q10EK7"/>
<dbReference type="PaxDb" id="39947-Q10EK7"/>
<dbReference type="EnsemblPlants" id="Os03t0699000-01">
    <property type="protein sequence ID" value="Os03t0699000-01"/>
    <property type="gene ID" value="Os03g0699000"/>
</dbReference>
<dbReference type="Gramene" id="Os03t0699000-01">
    <property type="protein sequence ID" value="Os03t0699000-01"/>
    <property type="gene ID" value="Os03g0699000"/>
</dbReference>
<dbReference type="KEGG" id="dosa:Os03g0699000"/>
<dbReference type="eggNOG" id="ENOG502S1R0">
    <property type="taxonomic scope" value="Eukaryota"/>
</dbReference>
<dbReference type="HOGENOM" id="CLU_101983_1_1_1"/>
<dbReference type="InParanoid" id="Q10EK7"/>
<dbReference type="OMA" id="SWVTNYL"/>
<dbReference type="Proteomes" id="UP000000763">
    <property type="component" value="Chromosome 3"/>
</dbReference>
<dbReference type="Proteomes" id="UP000007752">
    <property type="component" value="Chromosome 3"/>
</dbReference>
<dbReference type="Proteomes" id="UP000059680">
    <property type="component" value="Chromosome 3"/>
</dbReference>
<dbReference type="GO" id="GO:0016020">
    <property type="term" value="C:membrane"/>
    <property type="evidence" value="ECO:0007669"/>
    <property type="project" value="UniProtKB-SubCell"/>
</dbReference>
<dbReference type="GO" id="GO:0012511">
    <property type="term" value="C:monolayer-surrounded lipid storage body"/>
    <property type="evidence" value="ECO:0000318"/>
    <property type="project" value="GO_Central"/>
</dbReference>
<dbReference type="GO" id="GO:0019915">
    <property type="term" value="P:lipid storage"/>
    <property type="evidence" value="ECO:0000318"/>
    <property type="project" value="GO_Central"/>
</dbReference>
<dbReference type="GO" id="GO:0050826">
    <property type="term" value="P:response to freezing"/>
    <property type="evidence" value="ECO:0000318"/>
    <property type="project" value="GO_Central"/>
</dbReference>
<dbReference type="GO" id="GO:0010344">
    <property type="term" value="P:seed oilbody biogenesis"/>
    <property type="evidence" value="ECO:0000318"/>
    <property type="project" value="GO_Central"/>
</dbReference>
<dbReference type="InterPro" id="IPR000136">
    <property type="entry name" value="Oleosin"/>
</dbReference>
<dbReference type="PANTHER" id="PTHR33203">
    <property type="entry name" value="OLEOSIN"/>
    <property type="match status" value="1"/>
</dbReference>
<dbReference type="PANTHER" id="PTHR33203:SF44">
    <property type="entry name" value="OLEOSIN 20.3 KDA"/>
    <property type="match status" value="1"/>
</dbReference>
<dbReference type="Pfam" id="PF01277">
    <property type="entry name" value="Oleosin"/>
    <property type="match status" value="1"/>
</dbReference>
<dbReference type="PROSITE" id="PS00811">
    <property type="entry name" value="OLEOSINS"/>
    <property type="match status" value="1"/>
</dbReference>
<comment type="function">
    <text>May have a structural role to stabilize the lipid body during desiccation of the seed by preventing coalescence of the oil. Probably interacts with both lipid and phospholipid moieties of lipid bodies. May also provide recognition signals for specific lipase anchorage in lipolysis during seedling growth.</text>
</comment>
<comment type="subcellular location">
    <subcellularLocation>
        <location>Lipid droplet</location>
    </subcellularLocation>
    <subcellularLocation>
        <location>Membrane</location>
        <topology>Multi-pass membrane protein</topology>
    </subcellularLocation>
    <text>Surface of oil bodies. Oleosins exist at a monolayer lipid/water interface.</text>
</comment>
<comment type="similarity">
    <text evidence="4">Belongs to the oleosin family.</text>
</comment>
<reference key="1">
    <citation type="online journal article" date="1995" name="Plant Gene Register">
        <title>Two embryo-specific cDNAs encoding two oleosin isoforms on the surface of oil bodies from rice.</title>
        <authorList>
            <person name="Chen P.-W."/>
            <person name="Chai Y.-J."/>
            <person name="Wang L.-D."/>
            <person name="Tzen J.T.C."/>
            <person name="Tseng M.-J."/>
            <person name="Chen L.-J."/>
        </authorList>
        <locator>PGR95-143</locator>
    </citation>
    <scope>NUCLEOTIDE SEQUENCE [MRNA]</scope>
    <source>
        <strain>cv. Lomello</strain>
    </source>
</reference>
<reference key="2">
    <citation type="journal article" date="2005" name="Genome Res.">
        <title>Sequence, annotation, and analysis of synteny between rice chromosome 3 and diverged grass species.</title>
        <authorList>
            <consortium name="The rice chromosome 3 sequencing consortium"/>
            <person name="Buell C.R."/>
            <person name="Yuan Q."/>
            <person name="Ouyang S."/>
            <person name="Liu J."/>
            <person name="Zhu W."/>
            <person name="Wang A."/>
            <person name="Maiti R."/>
            <person name="Haas B."/>
            <person name="Wortman J."/>
            <person name="Pertea M."/>
            <person name="Jones K.M."/>
            <person name="Kim M."/>
            <person name="Overton L."/>
            <person name="Tsitrin T."/>
            <person name="Fadrosh D."/>
            <person name="Bera J."/>
            <person name="Weaver B."/>
            <person name="Jin S."/>
            <person name="Johri S."/>
            <person name="Reardon M."/>
            <person name="Webb K."/>
            <person name="Hill J."/>
            <person name="Moffat K."/>
            <person name="Tallon L."/>
            <person name="Van Aken S."/>
            <person name="Lewis M."/>
            <person name="Utterback T."/>
            <person name="Feldblyum T."/>
            <person name="Zismann V."/>
            <person name="Iobst S."/>
            <person name="Hsiao J."/>
            <person name="de Vazeille A.R."/>
            <person name="Salzberg S.L."/>
            <person name="White O."/>
            <person name="Fraser C.M."/>
            <person name="Yu Y."/>
            <person name="Kim H."/>
            <person name="Rambo T."/>
            <person name="Currie J."/>
            <person name="Collura K."/>
            <person name="Kernodle-Thompson S."/>
            <person name="Wei F."/>
            <person name="Kudrna K."/>
            <person name="Ammiraju J.S.S."/>
            <person name="Luo M."/>
            <person name="Goicoechea J.L."/>
            <person name="Wing R.A."/>
            <person name="Henry D."/>
            <person name="Oates R."/>
            <person name="Palmer M."/>
            <person name="Pries G."/>
            <person name="Saski C."/>
            <person name="Simmons J."/>
            <person name="Soderlund C."/>
            <person name="Nelson W."/>
            <person name="de la Bastide M."/>
            <person name="Spiegel L."/>
            <person name="Nascimento L."/>
            <person name="Huang E."/>
            <person name="Preston R."/>
            <person name="Zutavern T."/>
            <person name="Palmer L."/>
            <person name="O'Shaughnessy A."/>
            <person name="Dike S."/>
            <person name="McCombie W.R."/>
            <person name="Minx P."/>
            <person name="Cordum H."/>
            <person name="Wilson R."/>
            <person name="Jin W."/>
            <person name="Lee H.R."/>
            <person name="Jiang J."/>
            <person name="Jackson S."/>
        </authorList>
    </citation>
    <scope>NUCLEOTIDE SEQUENCE [LARGE SCALE GENOMIC DNA]</scope>
    <source>
        <strain>cv. Nipponbare</strain>
    </source>
</reference>
<reference key="3">
    <citation type="journal article" date="2005" name="Nature">
        <title>The map-based sequence of the rice genome.</title>
        <authorList>
            <consortium name="International rice genome sequencing project (IRGSP)"/>
        </authorList>
    </citation>
    <scope>NUCLEOTIDE SEQUENCE [LARGE SCALE GENOMIC DNA]</scope>
    <source>
        <strain>cv. Nipponbare</strain>
    </source>
</reference>
<reference key="4">
    <citation type="journal article" date="2008" name="Nucleic Acids Res.">
        <title>The rice annotation project database (RAP-DB): 2008 update.</title>
        <authorList>
            <consortium name="The rice annotation project (RAP)"/>
        </authorList>
    </citation>
    <scope>GENOME REANNOTATION</scope>
    <source>
        <strain>cv. Nipponbare</strain>
    </source>
</reference>
<reference key="5">
    <citation type="journal article" date="2013" name="Rice">
        <title>Improvement of the Oryza sativa Nipponbare reference genome using next generation sequence and optical map data.</title>
        <authorList>
            <person name="Kawahara Y."/>
            <person name="de la Bastide M."/>
            <person name="Hamilton J.P."/>
            <person name="Kanamori H."/>
            <person name="McCombie W.R."/>
            <person name="Ouyang S."/>
            <person name="Schwartz D.C."/>
            <person name="Tanaka T."/>
            <person name="Wu J."/>
            <person name="Zhou S."/>
            <person name="Childs K.L."/>
            <person name="Davidson R.M."/>
            <person name="Lin H."/>
            <person name="Quesada-Ocampo L."/>
            <person name="Vaillancourt B."/>
            <person name="Sakai H."/>
            <person name="Lee S.S."/>
            <person name="Kim J."/>
            <person name="Numa H."/>
            <person name="Itoh T."/>
            <person name="Buell C.R."/>
            <person name="Matsumoto T."/>
        </authorList>
    </citation>
    <scope>GENOME REANNOTATION</scope>
    <source>
        <strain>cv. Nipponbare</strain>
    </source>
</reference>
<reference key="6">
    <citation type="journal article" date="2005" name="PLoS Biol.">
        <title>The genomes of Oryza sativa: a history of duplications.</title>
        <authorList>
            <person name="Yu J."/>
            <person name="Wang J."/>
            <person name="Lin W."/>
            <person name="Li S."/>
            <person name="Li H."/>
            <person name="Zhou J."/>
            <person name="Ni P."/>
            <person name="Dong W."/>
            <person name="Hu S."/>
            <person name="Zeng C."/>
            <person name="Zhang J."/>
            <person name="Zhang Y."/>
            <person name="Li R."/>
            <person name="Xu Z."/>
            <person name="Li S."/>
            <person name="Li X."/>
            <person name="Zheng H."/>
            <person name="Cong L."/>
            <person name="Lin L."/>
            <person name="Yin J."/>
            <person name="Geng J."/>
            <person name="Li G."/>
            <person name="Shi J."/>
            <person name="Liu J."/>
            <person name="Lv H."/>
            <person name="Li J."/>
            <person name="Wang J."/>
            <person name="Deng Y."/>
            <person name="Ran L."/>
            <person name="Shi X."/>
            <person name="Wang X."/>
            <person name="Wu Q."/>
            <person name="Li C."/>
            <person name="Ren X."/>
            <person name="Wang J."/>
            <person name="Wang X."/>
            <person name="Li D."/>
            <person name="Liu D."/>
            <person name="Zhang X."/>
            <person name="Ji Z."/>
            <person name="Zhao W."/>
            <person name="Sun Y."/>
            <person name="Zhang Z."/>
            <person name="Bao J."/>
            <person name="Han Y."/>
            <person name="Dong L."/>
            <person name="Ji J."/>
            <person name="Chen P."/>
            <person name="Wu S."/>
            <person name="Liu J."/>
            <person name="Xiao Y."/>
            <person name="Bu D."/>
            <person name="Tan J."/>
            <person name="Yang L."/>
            <person name="Ye C."/>
            <person name="Zhang J."/>
            <person name="Xu J."/>
            <person name="Zhou Y."/>
            <person name="Yu Y."/>
            <person name="Zhang B."/>
            <person name="Zhuang S."/>
            <person name="Wei H."/>
            <person name="Liu B."/>
            <person name="Lei M."/>
            <person name="Yu H."/>
            <person name="Li Y."/>
            <person name="Xu H."/>
            <person name="Wei S."/>
            <person name="He X."/>
            <person name="Fang L."/>
            <person name="Zhang Z."/>
            <person name="Zhang Y."/>
            <person name="Huang X."/>
            <person name="Su Z."/>
            <person name="Tong W."/>
            <person name="Li J."/>
            <person name="Tong Z."/>
            <person name="Li S."/>
            <person name="Ye J."/>
            <person name="Wang L."/>
            <person name="Fang L."/>
            <person name="Lei T."/>
            <person name="Chen C.-S."/>
            <person name="Chen H.-C."/>
            <person name="Xu Z."/>
            <person name="Li H."/>
            <person name="Huang H."/>
            <person name="Zhang F."/>
            <person name="Xu H."/>
            <person name="Li N."/>
            <person name="Zhao C."/>
            <person name="Li S."/>
            <person name="Dong L."/>
            <person name="Huang Y."/>
            <person name="Li L."/>
            <person name="Xi Y."/>
            <person name="Qi Q."/>
            <person name="Li W."/>
            <person name="Zhang B."/>
            <person name="Hu W."/>
            <person name="Zhang Y."/>
            <person name="Tian X."/>
            <person name="Jiao Y."/>
            <person name="Liang X."/>
            <person name="Jin J."/>
            <person name="Gao L."/>
            <person name="Zheng W."/>
            <person name="Hao B."/>
            <person name="Liu S.-M."/>
            <person name="Wang W."/>
            <person name="Yuan L."/>
            <person name="Cao M."/>
            <person name="McDermott J."/>
            <person name="Samudrala R."/>
            <person name="Wang J."/>
            <person name="Wong G.K.-S."/>
            <person name="Yang H."/>
        </authorList>
    </citation>
    <scope>NUCLEOTIDE SEQUENCE [LARGE SCALE GENOMIC DNA]</scope>
    <source>
        <strain>cv. Nipponbare</strain>
    </source>
</reference>
<reference key="7">
    <citation type="submission" date="2006-10" db="EMBL/GenBank/DDBJ databases">
        <title>Oryza sativa full length cDNA.</title>
        <authorList>
            <consortium name="The rice full-length cDNA consortium"/>
        </authorList>
    </citation>
    <scope>NUCLEOTIDE SEQUENCE [LARGE SCALE MRNA]</scope>
    <source>
        <strain>cv. Nipponbare</strain>
    </source>
</reference>
<evidence type="ECO:0000250" key="1"/>
<evidence type="ECO:0000255" key="2"/>
<evidence type="ECO:0000256" key="3">
    <source>
        <dbReference type="SAM" id="MobiDB-lite"/>
    </source>
</evidence>
<evidence type="ECO:0000305" key="4"/>
<proteinExistence type="evidence at transcript level"/>
<protein>
    <recommendedName>
        <fullName>Oleosin 18 kDa</fullName>
    </recommendedName>
    <alternativeName>
        <fullName>OSE721</fullName>
    </alternativeName>
</protein>
<name>OLEO2_ORYSJ</name>
<gene>
    <name type="primary">OLE18</name>
    <name type="ordered locus">Os03g0699000</name>
    <name type="ordered locus">LOC_Os03g49190</name>
    <name type="ORF">OsJ_011734</name>
    <name type="ORF">OSJNBb0017F17.17</name>
</gene>
<keyword id="KW-0007">Acetylation</keyword>
<keyword id="KW-0551">Lipid droplet</keyword>
<keyword id="KW-0472">Membrane</keyword>
<keyword id="KW-1185">Reference proteome</keyword>
<keyword id="KW-0677">Repeat</keyword>
<keyword id="KW-0812">Transmembrane</keyword>
<keyword id="KW-1133">Transmembrane helix</keyword>
<feature type="initiator methionine" description="Removed" evidence="1">
    <location>
        <position position="1"/>
    </location>
</feature>
<feature type="chain" id="PRO_0000108147" description="Oleosin 18 kDa">
    <location>
        <begin position="2"/>
        <end position="172"/>
    </location>
</feature>
<feature type="transmembrane region" description="Helical" evidence="2">
    <location>
        <begin position="42"/>
        <end position="62"/>
    </location>
</feature>
<feature type="transmembrane region" description="Helical" evidence="2">
    <location>
        <begin position="70"/>
        <end position="90"/>
    </location>
</feature>
<feature type="transmembrane region" description="Helical" evidence="2">
    <location>
        <begin position="91"/>
        <end position="111"/>
    </location>
</feature>
<feature type="region of interest" description="Polar">
    <location>
        <begin position="2"/>
        <end position="38"/>
    </location>
</feature>
<feature type="region of interest" description="Hydrophobic">
    <location>
        <begin position="39"/>
        <end position="110"/>
    </location>
</feature>
<feature type="region of interest" description="Disordered" evidence="3">
    <location>
        <begin position="147"/>
        <end position="172"/>
    </location>
</feature>
<feature type="compositionally biased region" description="Gly residues" evidence="3">
    <location>
        <begin position="158"/>
        <end position="172"/>
    </location>
</feature>
<feature type="modified residue" description="N-acetylalanine" evidence="1">
    <location>
        <position position="2"/>
    </location>
</feature>
<feature type="sequence conflict" description="In Ref. 1; AAC02240." evidence="4" ref="1">
    <original>A</original>
    <variation>D</variation>
    <location>
        <position position="67"/>
    </location>
</feature>
<feature type="sequence conflict" description="In Ref. 1; AAC02240." evidence="4" ref="1">
    <original>G</original>
    <variation>A</variation>
    <location>
        <position position="146"/>
    </location>
</feature>
<accession>Q10EK7</accession>
<accession>B7F9V8</accession>
<accession>Q40646</accession>
<accession>Q71VC0</accession>
<accession>Q851S5</accession>
<sequence>MADRDRAGQYYQQQRGQVGETVKGILPEKAPSASQALTVATLFPLGGLLLVLSGLALAASVVGLAVATPVFLIFSPVLVPAALLIGLAVAGFLTSGALGLGGLSSLTFLANTARQAFQRTPDYVEQARRRMAEAAAHAGHKTAQAGHAIQGRADQAGTGAGAGGGAGTKTSS</sequence>